<comment type="function">
    <text>Sequence-specific transcription factor which is part of a developmental regulatory system that provides cells with specific positional identities on the anterior-posterior axis. Binds to sites in the 5'-flanking sequence of its coding region with various affinities. The consensus sequences of the high and low affinity binding sites are 5'-TAATGA[CG]-3' and 5'-CTAATTTT-3'.</text>
</comment>
<comment type="subcellular location">
    <subcellularLocation>
        <location>Nucleus</location>
    </subcellularLocation>
</comment>
<comment type="tissue specificity">
    <text>Embryonic nervous system.</text>
</comment>
<comment type="similarity">
    <text evidence="5">Belongs to the Antp homeobox family. Deformed subfamily.</text>
</comment>
<reference key="1">
    <citation type="journal article" date="1991" name="Mol. Cell. Biol.">
        <title>Alteration of homeobox gene expression by N-ras transformation of PA-1 human teratocarcinoma cells.</title>
        <authorList>
            <person name="Buettner R."/>
            <person name="Yim S.O."/>
            <person name="Hong Y.S."/>
            <person name="Boncinelli E."/>
            <person name="Tainsky M.A."/>
        </authorList>
    </citation>
    <scope>NUCLEOTIDE SEQUENCE [MRNA]</scope>
    <scope>VARIANTS PRO-70 AND PRO-140</scope>
</reference>
<reference key="2">
    <citation type="journal article" date="1990" name="Differentiation">
        <title>Expression of HOX homeogenes in human neuroblastoma cell culture lines.</title>
        <authorList>
            <person name="Peverali F.A."/>
            <person name="D'Esposito M."/>
            <person name="Acampora D."/>
            <person name="Bunone G."/>
            <person name="Negri M."/>
            <person name="Faiella A."/>
            <person name="Stornaiuolo A."/>
            <person name="Pannese M."/>
            <person name="Migliaccio E."/>
            <person name="Simeone A."/>
            <person name="Valle G.D."/>
            <person name="Boncinelli E."/>
        </authorList>
    </citation>
    <scope>NUCLEOTIDE SEQUENCE [MRNA]</scope>
</reference>
<reference key="3">
    <citation type="journal article" date="2003" name="Nature">
        <title>The DNA sequence of human chromosome 7.</title>
        <authorList>
            <person name="Hillier L.W."/>
            <person name="Fulton R.S."/>
            <person name="Fulton L.A."/>
            <person name="Graves T.A."/>
            <person name="Pepin K.H."/>
            <person name="Wagner-McPherson C."/>
            <person name="Layman D."/>
            <person name="Maas J."/>
            <person name="Jaeger S."/>
            <person name="Walker R."/>
            <person name="Wylie K."/>
            <person name="Sekhon M."/>
            <person name="Becker M.C."/>
            <person name="O'Laughlin M.D."/>
            <person name="Schaller M.E."/>
            <person name="Fewell G.A."/>
            <person name="Delehaunty K.D."/>
            <person name="Miner T.L."/>
            <person name="Nash W.E."/>
            <person name="Cordes M."/>
            <person name="Du H."/>
            <person name="Sun H."/>
            <person name="Edwards J."/>
            <person name="Bradshaw-Cordum H."/>
            <person name="Ali J."/>
            <person name="Andrews S."/>
            <person name="Isak A."/>
            <person name="Vanbrunt A."/>
            <person name="Nguyen C."/>
            <person name="Du F."/>
            <person name="Lamar B."/>
            <person name="Courtney L."/>
            <person name="Kalicki J."/>
            <person name="Ozersky P."/>
            <person name="Bielicki L."/>
            <person name="Scott K."/>
            <person name="Holmes A."/>
            <person name="Harkins R."/>
            <person name="Harris A."/>
            <person name="Strong C.M."/>
            <person name="Hou S."/>
            <person name="Tomlinson C."/>
            <person name="Dauphin-Kohlberg S."/>
            <person name="Kozlowicz-Reilly A."/>
            <person name="Leonard S."/>
            <person name="Rohlfing T."/>
            <person name="Rock S.M."/>
            <person name="Tin-Wollam A.-M."/>
            <person name="Abbott A."/>
            <person name="Minx P."/>
            <person name="Maupin R."/>
            <person name="Strowmatt C."/>
            <person name="Latreille P."/>
            <person name="Miller N."/>
            <person name="Johnson D."/>
            <person name="Murray J."/>
            <person name="Woessner J.P."/>
            <person name="Wendl M.C."/>
            <person name="Yang S.-P."/>
            <person name="Schultz B.R."/>
            <person name="Wallis J.W."/>
            <person name="Spieth J."/>
            <person name="Bieri T.A."/>
            <person name="Nelson J.O."/>
            <person name="Berkowicz N."/>
            <person name="Wohldmann P.E."/>
            <person name="Cook L.L."/>
            <person name="Hickenbotham M.T."/>
            <person name="Eldred J."/>
            <person name="Williams D."/>
            <person name="Bedell J.A."/>
            <person name="Mardis E.R."/>
            <person name="Clifton S.W."/>
            <person name="Chissoe S.L."/>
            <person name="Marra M.A."/>
            <person name="Raymond C."/>
            <person name="Haugen E."/>
            <person name="Gillett W."/>
            <person name="Zhou Y."/>
            <person name="James R."/>
            <person name="Phelps K."/>
            <person name="Iadanoto S."/>
            <person name="Bubb K."/>
            <person name="Simms E."/>
            <person name="Levy R."/>
            <person name="Clendenning J."/>
            <person name="Kaul R."/>
            <person name="Kent W.J."/>
            <person name="Furey T.S."/>
            <person name="Baertsch R.A."/>
            <person name="Brent M.R."/>
            <person name="Keibler E."/>
            <person name="Flicek P."/>
            <person name="Bork P."/>
            <person name="Suyama M."/>
            <person name="Bailey J.A."/>
            <person name="Portnoy M.E."/>
            <person name="Torrents D."/>
            <person name="Chinwalla A.T."/>
            <person name="Gish W.R."/>
            <person name="Eddy S.R."/>
            <person name="McPherson J.D."/>
            <person name="Olson M.V."/>
            <person name="Eichler E.E."/>
            <person name="Green E.D."/>
            <person name="Waterston R.H."/>
            <person name="Wilson R.K."/>
        </authorList>
    </citation>
    <scope>NUCLEOTIDE SEQUENCE [LARGE SCALE GENOMIC DNA]</scope>
</reference>
<reference key="4">
    <citation type="submission" date="2005-07" db="EMBL/GenBank/DDBJ databases">
        <authorList>
            <person name="Mural R.J."/>
            <person name="Istrail S."/>
            <person name="Sutton G.G."/>
            <person name="Florea L."/>
            <person name="Halpern A.L."/>
            <person name="Mobarry C.M."/>
            <person name="Lippert R."/>
            <person name="Walenz B."/>
            <person name="Shatkay H."/>
            <person name="Dew I."/>
            <person name="Miller J.R."/>
            <person name="Flanigan M.J."/>
            <person name="Edwards N.J."/>
            <person name="Bolanos R."/>
            <person name="Fasulo D."/>
            <person name="Halldorsson B.V."/>
            <person name="Hannenhalli S."/>
            <person name="Turner R."/>
            <person name="Yooseph S."/>
            <person name="Lu F."/>
            <person name="Nusskern D.R."/>
            <person name="Shue B.C."/>
            <person name="Zheng X.H."/>
            <person name="Zhong F."/>
            <person name="Delcher A.L."/>
            <person name="Huson D.H."/>
            <person name="Kravitz S.A."/>
            <person name="Mouchard L."/>
            <person name="Reinert K."/>
            <person name="Remington K.A."/>
            <person name="Clark A.G."/>
            <person name="Waterman M.S."/>
            <person name="Eichler E.E."/>
            <person name="Adams M.D."/>
            <person name="Hunkapiller M.W."/>
            <person name="Myers E.W."/>
            <person name="Venter J.C."/>
        </authorList>
    </citation>
    <scope>NUCLEOTIDE SEQUENCE [LARGE SCALE GENOMIC DNA]</scope>
</reference>
<reference key="5">
    <citation type="journal article" date="2003" name="Science">
        <title>Human chromosome 7: DNA sequence and biology.</title>
        <authorList>
            <person name="Scherer S.W."/>
            <person name="Cheung J."/>
            <person name="MacDonald J.R."/>
            <person name="Osborne L.R."/>
            <person name="Nakabayashi K."/>
            <person name="Herbrick J.-A."/>
            <person name="Carson A.R."/>
            <person name="Parker-Katiraee L."/>
            <person name="Skaug J."/>
            <person name="Khaja R."/>
            <person name="Zhang J."/>
            <person name="Hudek A.K."/>
            <person name="Li M."/>
            <person name="Haddad M."/>
            <person name="Duggan G.E."/>
            <person name="Fernandez B.A."/>
            <person name="Kanematsu E."/>
            <person name="Gentles S."/>
            <person name="Christopoulos C.C."/>
            <person name="Choufani S."/>
            <person name="Kwasnicka D."/>
            <person name="Zheng X.H."/>
            <person name="Lai Z."/>
            <person name="Nusskern D.R."/>
            <person name="Zhang Q."/>
            <person name="Gu Z."/>
            <person name="Lu F."/>
            <person name="Zeesman S."/>
            <person name="Nowaczyk M.J."/>
            <person name="Teshima I."/>
            <person name="Chitayat D."/>
            <person name="Shuman C."/>
            <person name="Weksberg R."/>
            <person name="Zackai E.H."/>
            <person name="Grebe T.A."/>
            <person name="Cox S.R."/>
            <person name="Kirkpatrick S.J."/>
            <person name="Rahman N."/>
            <person name="Friedman J.M."/>
            <person name="Heng H.H.Q."/>
            <person name="Pelicci P.G."/>
            <person name="Lo-Coco F."/>
            <person name="Belloni E."/>
            <person name="Shaffer L.G."/>
            <person name="Pober B."/>
            <person name="Morton C.C."/>
            <person name="Gusella J.F."/>
            <person name="Bruns G.A.P."/>
            <person name="Korf B.R."/>
            <person name="Quade B.J."/>
            <person name="Ligon A.H."/>
            <person name="Ferguson H."/>
            <person name="Higgins A.W."/>
            <person name="Leach N.T."/>
            <person name="Herrick S.R."/>
            <person name="Lemyre E."/>
            <person name="Farra C.G."/>
            <person name="Kim H.-G."/>
            <person name="Summers A.M."/>
            <person name="Gripp K.W."/>
            <person name="Roberts W."/>
            <person name="Szatmari P."/>
            <person name="Winsor E.J.T."/>
            <person name="Grzeschik K.-H."/>
            <person name="Teebi A."/>
            <person name="Minassian B.A."/>
            <person name="Kere J."/>
            <person name="Armengol L."/>
            <person name="Pujana M.A."/>
            <person name="Estivill X."/>
            <person name="Wilson M.D."/>
            <person name="Koop B.F."/>
            <person name="Tosi S."/>
            <person name="Moore G.E."/>
            <person name="Boright A.P."/>
            <person name="Zlotorynski E."/>
            <person name="Kerem B."/>
            <person name="Kroisel P.M."/>
            <person name="Petek E."/>
            <person name="Oscier D.G."/>
            <person name="Mould S.J."/>
            <person name="Doehner H."/>
            <person name="Doehner K."/>
            <person name="Rommens J.M."/>
            <person name="Vincent J.B."/>
            <person name="Venter J.C."/>
            <person name="Li P.W."/>
            <person name="Mural R.J."/>
            <person name="Adams M.D."/>
            <person name="Tsui L.-C."/>
        </authorList>
    </citation>
    <scope>NUCLEOTIDE SEQUENCE [LARGE SCALE GENOMIC DNA]</scope>
</reference>
<reference key="6">
    <citation type="journal article" date="1989" name="Genome">
        <title>Organization of human class I homeobox genes.</title>
        <authorList>
            <person name="Boncinelli E."/>
            <person name="Acampora D."/>
            <person name="Pannese M."/>
            <person name="D'Esposito M."/>
            <person name="Somma R."/>
            <person name="Gaudino G."/>
            <person name="Stornaiuolo A."/>
            <person name="Cafiero M."/>
            <person name="Faiella A."/>
            <person name="Simeone A."/>
        </authorList>
    </citation>
    <scope>NUCLEOTIDE SEQUENCE [GENOMIC DNA] OF 215-280</scope>
</reference>
<reference key="7">
    <citation type="journal article" date="1989" name="Genomics">
        <title>Isolation, chromosomal localization, and nucleotide sequence of the human HOX 1.4 homeobox.</title>
        <authorList>
            <person name="Ferguson-Smith A.C."/>
            <person name="Fienberg A."/>
            <person name="Ruddle F.H."/>
        </authorList>
    </citation>
    <scope>NUCLEOTIDE SEQUENCE [GENOMIC DNA] OF 205-277</scope>
</reference>
<reference key="8">
    <citation type="journal article" date="2006" name="Science">
        <title>The consensus coding sequences of human breast and colorectal cancers.</title>
        <authorList>
            <person name="Sjoeblom T."/>
            <person name="Jones S."/>
            <person name="Wood L.D."/>
            <person name="Parsons D.W."/>
            <person name="Lin J."/>
            <person name="Barber T.D."/>
            <person name="Mandelker D."/>
            <person name="Leary R.J."/>
            <person name="Ptak J."/>
            <person name="Silliman N."/>
            <person name="Szabo S."/>
            <person name="Buckhaults P."/>
            <person name="Farrell C."/>
            <person name="Meeh P."/>
            <person name="Markowitz S.D."/>
            <person name="Willis J."/>
            <person name="Dawson D."/>
            <person name="Willson J.K.V."/>
            <person name="Gazdar A.F."/>
            <person name="Hartigan J."/>
            <person name="Wu L."/>
            <person name="Liu C."/>
            <person name="Parmigiani G."/>
            <person name="Park B.H."/>
            <person name="Bachman K.E."/>
            <person name="Papadopoulos N."/>
            <person name="Vogelstein B."/>
            <person name="Kinzler K.W."/>
            <person name="Velculescu V.E."/>
        </authorList>
    </citation>
    <scope>VARIANT [LARGE SCALE ANALYSIS] ASP-37</scope>
</reference>
<proteinExistence type="evidence at protein level"/>
<accession>Q00056</accession>
<accession>A4D180</accession>
<accession>O43366</accession>
<evidence type="ECO:0000255" key="1">
    <source>
        <dbReference type="PROSITE-ProRule" id="PRU00108"/>
    </source>
</evidence>
<evidence type="ECO:0000256" key="2">
    <source>
        <dbReference type="SAM" id="MobiDB-lite"/>
    </source>
</evidence>
<evidence type="ECO:0000269" key="3">
    <source>
    </source>
</evidence>
<evidence type="ECO:0000269" key="4">
    <source>
    </source>
</evidence>
<evidence type="ECO:0000305" key="5"/>
<gene>
    <name type="primary">HOXA4</name>
    <name type="synonym">HOX1D</name>
</gene>
<feature type="chain" id="PRO_0000200048" description="Homeobox protein Hox-A4">
    <location>
        <begin position="1"/>
        <end position="320"/>
    </location>
</feature>
<feature type="DNA-binding region" description="Homeobox" evidence="1">
    <location>
        <begin position="215"/>
        <end position="274"/>
    </location>
</feature>
<feature type="region of interest" description="Disordered" evidence="2">
    <location>
        <begin position="19"/>
        <end position="77"/>
    </location>
</feature>
<feature type="region of interest" description="Disordered" evidence="2">
    <location>
        <begin position="101"/>
        <end position="168"/>
    </location>
</feature>
<feature type="region of interest" description="Disordered" evidence="2">
    <location>
        <begin position="273"/>
        <end position="320"/>
    </location>
</feature>
<feature type="short sequence motif" description="Antp-type hexapeptide">
    <location>
        <begin position="194"/>
        <end position="199"/>
    </location>
</feature>
<feature type="compositionally biased region" description="Gly residues" evidence="2">
    <location>
        <begin position="28"/>
        <end position="41"/>
    </location>
</feature>
<feature type="compositionally biased region" description="Low complexity" evidence="2">
    <location>
        <begin position="52"/>
        <end position="62"/>
    </location>
</feature>
<feature type="compositionally biased region" description="Pro residues" evidence="2">
    <location>
        <begin position="139"/>
        <end position="153"/>
    </location>
</feature>
<feature type="compositionally biased region" description="Low complexity" evidence="2">
    <location>
        <begin position="159"/>
        <end position="168"/>
    </location>
</feature>
<feature type="compositionally biased region" description="Low complexity" evidence="2">
    <location>
        <begin position="310"/>
        <end position="320"/>
    </location>
</feature>
<feature type="sequence variant" id="VAR_036266" description="In a breast cancer sample; somatic mutation." evidence="4">
    <original>G</original>
    <variation>D</variation>
    <location>
        <position position="37"/>
    </location>
</feature>
<feature type="sequence variant" id="VAR_028414" description="In dbSNP:rs6944345." evidence="3">
    <original>T</original>
    <variation>P</variation>
    <location>
        <position position="70"/>
    </location>
</feature>
<feature type="sequence variant" id="VAR_028415" description="In dbSNP:rs10251056." evidence="3">
    <original>L</original>
    <variation>P</variation>
    <location>
        <position position="140"/>
    </location>
</feature>
<feature type="sequence variant" id="VAR_028416" description="In dbSNP:rs13246088.">
    <original>L</original>
    <variation>F</variation>
    <location>
        <position position="178"/>
    </location>
</feature>
<feature type="sequence variant" id="VAR_028417" description="In dbSNP:rs6976847.">
    <original>T</original>
    <variation>P</variation>
    <location>
        <position position="251"/>
    </location>
</feature>
<feature type="sequence variant" id="VAR_028418" description="In dbSNP:rs17500757.">
    <original>P</original>
    <variation>S</variation>
    <location>
        <position position="317"/>
    </location>
</feature>
<feature type="sequence conflict" description="In Ref. 1; AAA58664." evidence="5" ref="1">
    <original>A</original>
    <variation>P</variation>
    <location>
        <position position="108"/>
    </location>
</feature>
<feature type="sequence conflict" description="In Ref. 7; AAA53290." evidence="5" ref="7">
    <original>A</original>
    <variation>S</variation>
    <location>
        <position position="205"/>
    </location>
</feature>
<feature type="sequence conflict" description="In Ref. 7; AAA53290." evidence="5" ref="7">
    <original>KL</original>
    <variation>NC</variation>
    <location>
        <begin position="275"/>
        <end position="276"/>
    </location>
</feature>
<dbReference type="EMBL" id="M74297">
    <property type="protein sequence ID" value="AAA58664.1"/>
    <property type="molecule type" value="mRNA"/>
</dbReference>
<dbReference type="EMBL" id="AC004080">
    <property type="status" value="NOT_ANNOTATED_CDS"/>
    <property type="molecule type" value="Genomic_DNA"/>
</dbReference>
<dbReference type="EMBL" id="CH471073">
    <property type="protein sequence ID" value="EAW93872.1"/>
    <property type="molecule type" value="Genomic_DNA"/>
</dbReference>
<dbReference type="EMBL" id="CH236948">
    <property type="protein sequence ID" value="EAL24224.1"/>
    <property type="molecule type" value="Genomic_DNA"/>
</dbReference>
<dbReference type="EMBL" id="M28199">
    <property type="protein sequence ID" value="AAA53290.1"/>
    <property type="molecule type" value="Genomic_DNA"/>
</dbReference>
<dbReference type="CCDS" id="CCDS5405.1"/>
<dbReference type="PIR" id="A39724">
    <property type="entry name" value="A39724"/>
</dbReference>
<dbReference type="RefSeq" id="NP_002132.3">
    <property type="nucleotide sequence ID" value="NM_002141.4"/>
</dbReference>
<dbReference type="SMR" id="Q00056"/>
<dbReference type="BioGRID" id="109441">
    <property type="interactions" value="46"/>
</dbReference>
<dbReference type="FunCoup" id="Q00056">
    <property type="interactions" value="1149"/>
</dbReference>
<dbReference type="IntAct" id="Q00056">
    <property type="interactions" value="10"/>
</dbReference>
<dbReference type="STRING" id="9606.ENSP00000479166"/>
<dbReference type="GlyGen" id="Q00056">
    <property type="glycosylation" value="1 site"/>
</dbReference>
<dbReference type="iPTMnet" id="Q00056"/>
<dbReference type="PhosphoSitePlus" id="Q00056"/>
<dbReference type="BioMuta" id="HOXA4"/>
<dbReference type="DMDM" id="116242514"/>
<dbReference type="jPOST" id="Q00056"/>
<dbReference type="MassIVE" id="Q00056"/>
<dbReference type="PaxDb" id="9606-ENSP00000353151"/>
<dbReference type="PeptideAtlas" id="Q00056"/>
<dbReference type="ProteomicsDB" id="57839"/>
<dbReference type="Pumba" id="Q00056"/>
<dbReference type="Antibodypedia" id="35236">
    <property type="antibodies" value="174 antibodies from 26 providers"/>
</dbReference>
<dbReference type="DNASU" id="3201"/>
<dbReference type="Ensembl" id="ENST00000360046.10">
    <property type="protein sequence ID" value="ENSP00000353151.5"/>
    <property type="gene ID" value="ENSG00000197576.15"/>
</dbReference>
<dbReference type="Ensembl" id="ENST00000610970.1">
    <property type="protein sequence ID" value="ENSP00000479166.1"/>
    <property type="gene ID" value="ENSG00000197576.15"/>
</dbReference>
<dbReference type="GeneID" id="3201"/>
<dbReference type="KEGG" id="hsa:3201"/>
<dbReference type="MANE-Select" id="ENST00000360046.10">
    <property type="protein sequence ID" value="ENSP00000353151.5"/>
    <property type="RefSeq nucleotide sequence ID" value="NM_002141.5"/>
    <property type="RefSeq protein sequence ID" value="NP_002132.3"/>
</dbReference>
<dbReference type="UCSC" id="uc003sym.4">
    <property type="organism name" value="human"/>
</dbReference>
<dbReference type="AGR" id="HGNC:5105"/>
<dbReference type="CTD" id="3201"/>
<dbReference type="DisGeNET" id="3201"/>
<dbReference type="GeneCards" id="HOXA4"/>
<dbReference type="HGNC" id="HGNC:5105">
    <property type="gene designation" value="HOXA4"/>
</dbReference>
<dbReference type="HPA" id="ENSG00000197576">
    <property type="expression patterns" value="Tissue enhanced (brain)"/>
</dbReference>
<dbReference type="MIM" id="142953">
    <property type="type" value="gene"/>
</dbReference>
<dbReference type="neXtProt" id="NX_Q00056"/>
<dbReference type="OpenTargets" id="ENSG00000197576"/>
<dbReference type="PharmGKB" id="PA29382"/>
<dbReference type="VEuPathDB" id="HostDB:ENSG00000197576"/>
<dbReference type="eggNOG" id="KOG0489">
    <property type="taxonomic scope" value="Eukaryota"/>
</dbReference>
<dbReference type="GeneTree" id="ENSGT00940000158988"/>
<dbReference type="HOGENOM" id="CLU_061398_0_1_1"/>
<dbReference type="InParanoid" id="Q00056"/>
<dbReference type="OMA" id="GHQVASQ"/>
<dbReference type="OrthoDB" id="6159439at2759"/>
<dbReference type="PAN-GO" id="Q00056">
    <property type="GO annotations" value="6 GO annotations based on evolutionary models"/>
</dbReference>
<dbReference type="PhylomeDB" id="Q00056"/>
<dbReference type="TreeFam" id="TF352857"/>
<dbReference type="PathwayCommons" id="Q00056"/>
<dbReference type="Reactome" id="R-HSA-5617472">
    <property type="pathway name" value="Activation of anterior HOX genes in hindbrain development during early embryogenesis"/>
</dbReference>
<dbReference type="BioGRID-ORCS" id="3201">
    <property type="hits" value="8 hits in 1168 CRISPR screens"/>
</dbReference>
<dbReference type="GeneWiki" id="HOXA4"/>
<dbReference type="GenomeRNAi" id="3201"/>
<dbReference type="Pharos" id="Q00056">
    <property type="development level" value="Tbio"/>
</dbReference>
<dbReference type="PRO" id="PR:Q00056"/>
<dbReference type="Proteomes" id="UP000005640">
    <property type="component" value="Chromosome 7"/>
</dbReference>
<dbReference type="RNAct" id="Q00056">
    <property type="molecule type" value="protein"/>
</dbReference>
<dbReference type="Bgee" id="ENSG00000197576">
    <property type="expression patterns" value="Expressed in esophagogastric junction muscularis propria and 84 other cell types or tissues"/>
</dbReference>
<dbReference type="ExpressionAtlas" id="Q00056">
    <property type="expression patterns" value="baseline and differential"/>
</dbReference>
<dbReference type="GO" id="GO:0000785">
    <property type="term" value="C:chromatin"/>
    <property type="evidence" value="ECO:0000247"/>
    <property type="project" value="NTNU_SB"/>
</dbReference>
<dbReference type="GO" id="GO:0016604">
    <property type="term" value="C:nuclear body"/>
    <property type="evidence" value="ECO:0000314"/>
    <property type="project" value="HPA"/>
</dbReference>
<dbReference type="GO" id="GO:0005654">
    <property type="term" value="C:nucleoplasm"/>
    <property type="evidence" value="ECO:0000318"/>
    <property type="project" value="GO_Central"/>
</dbReference>
<dbReference type="GO" id="GO:0000981">
    <property type="term" value="F:DNA-binding transcription factor activity, RNA polymerase II-specific"/>
    <property type="evidence" value="ECO:0000247"/>
    <property type="project" value="NTNU_SB"/>
</dbReference>
<dbReference type="GO" id="GO:0000978">
    <property type="term" value="F:RNA polymerase II cis-regulatory region sequence-specific DNA binding"/>
    <property type="evidence" value="ECO:0000318"/>
    <property type="project" value="GO_Central"/>
</dbReference>
<dbReference type="GO" id="GO:1990837">
    <property type="term" value="F:sequence-specific double-stranded DNA binding"/>
    <property type="evidence" value="ECO:0000314"/>
    <property type="project" value="ARUK-UCL"/>
</dbReference>
<dbReference type="GO" id="GO:0009653">
    <property type="term" value="P:anatomical structure morphogenesis"/>
    <property type="evidence" value="ECO:0000304"/>
    <property type="project" value="ProtInc"/>
</dbReference>
<dbReference type="GO" id="GO:0009952">
    <property type="term" value="P:anterior/posterior pattern specification"/>
    <property type="evidence" value="ECO:0000318"/>
    <property type="project" value="GO_Central"/>
</dbReference>
<dbReference type="GO" id="GO:0048704">
    <property type="term" value="P:embryonic skeletal system morphogenesis"/>
    <property type="evidence" value="ECO:0000318"/>
    <property type="project" value="GO_Central"/>
</dbReference>
<dbReference type="GO" id="GO:0045944">
    <property type="term" value="P:positive regulation of transcription by RNA polymerase II"/>
    <property type="evidence" value="ECO:0000318"/>
    <property type="project" value="GO_Central"/>
</dbReference>
<dbReference type="CDD" id="cd00086">
    <property type="entry name" value="homeodomain"/>
    <property type="match status" value="1"/>
</dbReference>
<dbReference type="FunFam" id="1.10.10.60:FF:000029">
    <property type="entry name" value="Homeobox protein Hox-D4"/>
    <property type="match status" value="1"/>
</dbReference>
<dbReference type="Gene3D" id="1.10.10.60">
    <property type="entry name" value="Homeodomain-like"/>
    <property type="match status" value="1"/>
</dbReference>
<dbReference type="InterPro" id="IPR050609">
    <property type="entry name" value="Antp_homeobox_Deformed_sf"/>
</dbReference>
<dbReference type="InterPro" id="IPR001356">
    <property type="entry name" value="HD"/>
</dbReference>
<dbReference type="InterPro" id="IPR020479">
    <property type="entry name" value="HD_metazoa"/>
</dbReference>
<dbReference type="InterPro" id="IPR017995">
    <property type="entry name" value="Homeobox_antennapedia"/>
</dbReference>
<dbReference type="InterPro" id="IPR001827">
    <property type="entry name" value="Homeobox_Antennapedia_CS"/>
</dbReference>
<dbReference type="InterPro" id="IPR017970">
    <property type="entry name" value="Homeobox_CS"/>
</dbReference>
<dbReference type="InterPro" id="IPR009057">
    <property type="entry name" value="Homeodomain-like_sf"/>
</dbReference>
<dbReference type="PANTHER" id="PTHR45771:SF2">
    <property type="entry name" value="HOMEOBOX PROTEIN HOX-A4"/>
    <property type="match status" value="1"/>
</dbReference>
<dbReference type="PANTHER" id="PTHR45771">
    <property type="entry name" value="HOMEOTIC PROTEIN DEFORMED"/>
    <property type="match status" value="1"/>
</dbReference>
<dbReference type="Pfam" id="PF00046">
    <property type="entry name" value="Homeodomain"/>
    <property type="match status" value="1"/>
</dbReference>
<dbReference type="PRINTS" id="PR00025">
    <property type="entry name" value="ANTENNAPEDIA"/>
</dbReference>
<dbReference type="PRINTS" id="PR00024">
    <property type="entry name" value="HOMEOBOX"/>
</dbReference>
<dbReference type="SMART" id="SM00389">
    <property type="entry name" value="HOX"/>
    <property type="match status" value="1"/>
</dbReference>
<dbReference type="SUPFAM" id="SSF46689">
    <property type="entry name" value="Homeodomain-like"/>
    <property type="match status" value="1"/>
</dbReference>
<dbReference type="PROSITE" id="PS00032">
    <property type="entry name" value="ANTENNAPEDIA"/>
    <property type="match status" value="1"/>
</dbReference>
<dbReference type="PROSITE" id="PS00027">
    <property type="entry name" value="HOMEOBOX_1"/>
    <property type="match status" value="1"/>
</dbReference>
<dbReference type="PROSITE" id="PS50071">
    <property type="entry name" value="HOMEOBOX_2"/>
    <property type="match status" value="1"/>
</dbReference>
<protein>
    <recommendedName>
        <fullName>Homeobox protein Hox-A4</fullName>
    </recommendedName>
    <alternativeName>
        <fullName>Homeobox protein Hox-1.4</fullName>
    </alternativeName>
    <alternativeName>
        <fullName>Homeobox protein Hox-1D</fullName>
    </alternativeName>
</protein>
<organism>
    <name type="scientific">Homo sapiens</name>
    <name type="common">Human</name>
    <dbReference type="NCBI Taxonomy" id="9606"/>
    <lineage>
        <taxon>Eukaryota</taxon>
        <taxon>Metazoa</taxon>
        <taxon>Chordata</taxon>
        <taxon>Craniata</taxon>
        <taxon>Vertebrata</taxon>
        <taxon>Euteleostomi</taxon>
        <taxon>Mammalia</taxon>
        <taxon>Eutheria</taxon>
        <taxon>Euarchontoglires</taxon>
        <taxon>Primates</taxon>
        <taxon>Haplorrhini</taxon>
        <taxon>Catarrhini</taxon>
        <taxon>Hominidae</taxon>
        <taxon>Homo</taxon>
    </lineage>
</organism>
<name>HXA4_HUMAN</name>
<keyword id="KW-0217">Developmental protein</keyword>
<keyword id="KW-0238">DNA-binding</keyword>
<keyword id="KW-0371">Homeobox</keyword>
<keyword id="KW-0539">Nucleus</keyword>
<keyword id="KW-1267">Proteomics identification</keyword>
<keyword id="KW-1185">Reference proteome</keyword>
<keyword id="KW-0804">Transcription</keyword>
<keyword id="KW-0805">Transcription regulation</keyword>
<sequence length="320" mass="34499">MTMSSFLINSNYIEPKFPPFEEYAQHSGSGGADGGPGGGPGYQQPPAPPTQHLPLQQPQLPHAGGGREPTASYYAPRTAREPAYPAAALYPAHGAADTAYPYGYRGGASPGRPPQPEQPPAQAKGPAHGLHASHVLQPQLPPPLQPRAVPPAAPRRCEAAPATPGVPAGGSAPACPLLLADKSPLGLKGKEPVVYPWMKKIHVSAVNPSYNGGEPKRSRTAYTRQQVLELEKEFHFNRYLTRRRRIEIAHTLCLSERQVKIWFQNRRMKWKKDHKLPNTKMRSSNSASASAGPPGKAQTQSPHLHPHPHPSTSTPVPSSI</sequence>